<reference key="1">
    <citation type="journal article" date="2002" name="Nature">
        <title>The genome sequence and structure of rice chromosome 1.</title>
        <authorList>
            <person name="Sasaki T."/>
            <person name="Matsumoto T."/>
            <person name="Yamamoto K."/>
            <person name="Sakata K."/>
            <person name="Baba T."/>
            <person name="Katayose Y."/>
            <person name="Wu J."/>
            <person name="Niimura Y."/>
            <person name="Cheng Z."/>
            <person name="Nagamura Y."/>
            <person name="Antonio B.A."/>
            <person name="Kanamori H."/>
            <person name="Hosokawa S."/>
            <person name="Masukawa M."/>
            <person name="Arikawa K."/>
            <person name="Chiden Y."/>
            <person name="Hayashi M."/>
            <person name="Okamoto M."/>
            <person name="Ando T."/>
            <person name="Aoki H."/>
            <person name="Arita K."/>
            <person name="Hamada M."/>
            <person name="Harada C."/>
            <person name="Hijishita S."/>
            <person name="Honda M."/>
            <person name="Ichikawa Y."/>
            <person name="Idonuma A."/>
            <person name="Iijima M."/>
            <person name="Ikeda M."/>
            <person name="Ikeno M."/>
            <person name="Ito S."/>
            <person name="Ito T."/>
            <person name="Ito Y."/>
            <person name="Ito Y."/>
            <person name="Iwabuchi A."/>
            <person name="Kamiya K."/>
            <person name="Karasawa W."/>
            <person name="Katagiri S."/>
            <person name="Kikuta A."/>
            <person name="Kobayashi N."/>
            <person name="Kono I."/>
            <person name="Machita K."/>
            <person name="Maehara T."/>
            <person name="Mizuno H."/>
            <person name="Mizubayashi T."/>
            <person name="Mukai Y."/>
            <person name="Nagasaki H."/>
            <person name="Nakashima M."/>
            <person name="Nakama Y."/>
            <person name="Nakamichi Y."/>
            <person name="Nakamura M."/>
            <person name="Namiki N."/>
            <person name="Negishi M."/>
            <person name="Ohta I."/>
            <person name="Ono N."/>
            <person name="Saji S."/>
            <person name="Sakai K."/>
            <person name="Shibata M."/>
            <person name="Shimokawa T."/>
            <person name="Shomura A."/>
            <person name="Song J."/>
            <person name="Takazaki Y."/>
            <person name="Terasawa K."/>
            <person name="Tsuji K."/>
            <person name="Waki K."/>
            <person name="Yamagata H."/>
            <person name="Yamane H."/>
            <person name="Yoshiki S."/>
            <person name="Yoshihara R."/>
            <person name="Yukawa K."/>
            <person name="Zhong H."/>
            <person name="Iwama H."/>
            <person name="Endo T."/>
            <person name="Ito H."/>
            <person name="Hahn J.H."/>
            <person name="Kim H.-I."/>
            <person name="Eun M.-Y."/>
            <person name="Yano M."/>
            <person name="Jiang J."/>
            <person name="Gojobori T."/>
        </authorList>
    </citation>
    <scope>NUCLEOTIDE SEQUENCE [LARGE SCALE GENOMIC DNA]</scope>
    <source>
        <strain>cv. Nipponbare</strain>
    </source>
</reference>
<reference key="2">
    <citation type="journal article" date="2005" name="Nature">
        <title>The map-based sequence of the rice genome.</title>
        <authorList>
            <consortium name="International rice genome sequencing project (IRGSP)"/>
        </authorList>
    </citation>
    <scope>NUCLEOTIDE SEQUENCE [LARGE SCALE GENOMIC DNA]</scope>
    <source>
        <strain>cv. Nipponbare</strain>
    </source>
</reference>
<reference key="3">
    <citation type="journal article" date="2008" name="Nucleic Acids Res.">
        <title>The rice annotation project database (RAP-DB): 2008 update.</title>
        <authorList>
            <consortium name="The rice annotation project (RAP)"/>
        </authorList>
    </citation>
    <scope>GENOME REANNOTATION</scope>
    <source>
        <strain>cv. Nipponbare</strain>
    </source>
</reference>
<reference key="4">
    <citation type="journal article" date="2013" name="Rice">
        <title>Improvement of the Oryza sativa Nipponbare reference genome using next generation sequence and optical map data.</title>
        <authorList>
            <person name="Kawahara Y."/>
            <person name="de la Bastide M."/>
            <person name="Hamilton J.P."/>
            <person name="Kanamori H."/>
            <person name="McCombie W.R."/>
            <person name="Ouyang S."/>
            <person name="Schwartz D.C."/>
            <person name="Tanaka T."/>
            <person name="Wu J."/>
            <person name="Zhou S."/>
            <person name="Childs K.L."/>
            <person name="Davidson R.M."/>
            <person name="Lin H."/>
            <person name="Quesada-Ocampo L."/>
            <person name="Vaillancourt B."/>
            <person name="Sakai H."/>
            <person name="Lee S.S."/>
            <person name="Kim J."/>
            <person name="Numa H."/>
            <person name="Itoh T."/>
            <person name="Buell C.R."/>
            <person name="Matsumoto T."/>
        </authorList>
    </citation>
    <scope>GENOME REANNOTATION</scope>
    <source>
        <strain>cv. Nipponbare</strain>
    </source>
</reference>
<reference key="5">
    <citation type="journal article" date="2003" name="Science">
        <title>Collection, mapping, and annotation of over 28,000 cDNA clones from japonica rice.</title>
        <authorList>
            <consortium name="The rice full-length cDNA consortium"/>
        </authorList>
    </citation>
    <scope>NUCLEOTIDE SEQUENCE [LARGE SCALE MRNA] (ISOFORM 2)</scope>
    <source>
        <strain>cv. Nipponbare</strain>
    </source>
</reference>
<reference key="6">
    <citation type="journal article" date="2017" name="Plant Cell">
        <title>Tissue-specific ubiquitination by IPA1 INTERACTING PROTEIN1 modulates IPA1 protein levels to regulate plant architecture in rice.</title>
        <authorList>
            <person name="Wang J."/>
            <person name="Yu H."/>
            <person name="Xiong G."/>
            <person name="Lu Z."/>
            <person name="Jiao Y."/>
            <person name="Meng X."/>
            <person name="Liu G."/>
            <person name="Chen X."/>
            <person name="Wang Y."/>
            <person name="Li J."/>
        </authorList>
    </citation>
    <scope>FUNCTION</scope>
    <scope>CATALYTIC ACTIVITY</scope>
    <scope>INTERACTION WITH SPL14</scope>
    <scope>SUBCELLULAR LOCATION</scope>
    <scope>MUTAGENESIS OF HIS-74 AND CYS-80</scope>
    <scope>DISRUPTION PHENOTYPE</scope>
</reference>
<protein>
    <recommendedName>
        <fullName evidence="5">E3 ubiquitin-protein ligase IPI1</fullName>
        <ecNumber evidence="3">2.3.2.27</ecNumber>
    </recommendedName>
    <alternativeName>
        <fullName evidence="4">IPA1-interacting protein 1</fullName>
    </alternativeName>
</protein>
<accession>Q5Z8R1</accession>
<accession>B7EHI9</accession>
<accession>Q0JMY2</accession>
<evidence type="ECO:0000255" key="1">
    <source>
        <dbReference type="PROSITE-ProRule" id="PRU00175"/>
    </source>
</evidence>
<evidence type="ECO:0000256" key="2">
    <source>
        <dbReference type="SAM" id="MobiDB-lite"/>
    </source>
</evidence>
<evidence type="ECO:0000269" key="3">
    <source>
    </source>
</evidence>
<evidence type="ECO:0000303" key="4">
    <source>
    </source>
</evidence>
<evidence type="ECO:0000305" key="5"/>
<evidence type="ECO:0000312" key="6">
    <source>
        <dbReference type="EMBL" id="BAD52927.1"/>
    </source>
</evidence>
<evidence type="ECO:0000312" key="7">
    <source>
        <dbReference type="EMBL" id="BAD53853.1"/>
    </source>
</evidence>
<evidence type="ECO:0000312" key="8">
    <source>
        <dbReference type="EMBL" id="BAS72030.1"/>
    </source>
</evidence>
<sequence>MGAEEEEEPASAVGREGGGGGGGARAAGAGAGGDTADDDDSGESAAAVVPCSICLDAVVAGGGDRSTARLQCGHEFHLDCIGSAFNAKGVMQCPNCRQIERGNWLYANGSRPSQDVSNDDWGHDEDFYDANQPETSRSVFLPFRFQWCPIGRLAQLPSVFDEGESAPPVTFHDFMGQNFTSEHLPVSAPGATPPGPYIAYFQPLQSSASSSSSHVTERTMDGTTYHDHWNPLPGPSDGRPLATVHPIDFHHNHWTHLPNSYSQPNSNNGVAEQMAIPVVPMRVGGLDSDSQQRGSLPSVYGNGSGSRSRIPSVPPMAPQFMRPHGNINEQYQQNSSSLYAAPQRRTAVQAVQDSMNFTLFPQAPTGPNSMETEDAGGNQFYAWERDRFAPYPLMPVDSEANWWGSTPQSHGVTDHSAAPGRRLFGQWIGAGRSPPPPPPPPADNSSYRQMHIPRM</sequence>
<proteinExistence type="evidence at protein level"/>
<feature type="chain" id="PRO_0000453486" description="E3 ubiquitin-protein ligase IPI1">
    <location>
        <begin position="1"/>
        <end position="455"/>
    </location>
</feature>
<feature type="zinc finger region" description="RING-type; atypical" evidence="1">
    <location>
        <begin position="51"/>
        <end position="97"/>
    </location>
</feature>
<feature type="region of interest" description="Disordered" evidence="2">
    <location>
        <begin position="1"/>
        <end position="42"/>
    </location>
</feature>
<feature type="region of interest" description="Disordered" evidence="2">
    <location>
        <begin position="286"/>
        <end position="311"/>
    </location>
</feature>
<feature type="region of interest" description="Disordered" evidence="2">
    <location>
        <begin position="426"/>
        <end position="455"/>
    </location>
</feature>
<feature type="compositionally biased region" description="Gly residues" evidence="2">
    <location>
        <begin position="15"/>
        <end position="33"/>
    </location>
</feature>
<feature type="compositionally biased region" description="Pro residues" evidence="2">
    <location>
        <begin position="433"/>
        <end position="442"/>
    </location>
</feature>
<feature type="splice variant" id="VSP_061157" description="In isoform 2.">
    <location>
        <begin position="304"/>
        <end position="455"/>
    </location>
</feature>
<feature type="mutagenesis site" description="Loss of E3 ubiquitin-protein ligase activity." evidence="3">
    <original>H</original>
    <variation>Y</variation>
    <location>
        <position position="74"/>
    </location>
</feature>
<feature type="mutagenesis site" description="Loss of E3 ubiquitin-protein ligase activity." evidence="3">
    <original>C</original>
    <variation>S</variation>
    <location>
        <position position="80"/>
    </location>
</feature>
<comment type="function">
    <text evidence="3">Functions as an E3 ligase that promotes polyubiquitination of SPL14/IPA1 for subsequent proteasomal degradation (PubMed:28298520). Regulates plant architecture by modulating SPL14/IPA1 abundance (PubMed:28298520). Promotes the degradation of SPL14/IPA1 in panicles, while it stabilizes SPL14/IPA1 in shoot apices (PubMed:28298520). Ubiquitinates the SPL14/IPA1-mediated complex with 'Lys-48'-linked polyubiquitin in panicles and 'Lys-63'-linked polyubiquitin chains in the shoot apex (PubMed:28298520).</text>
</comment>
<comment type="catalytic activity">
    <reaction evidence="3">
        <text>S-ubiquitinyl-[E2 ubiquitin-conjugating enzyme]-L-cysteine + [acceptor protein]-L-lysine = [E2 ubiquitin-conjugating enzyme]-L-cysteine + N(6)-ubiquitinyl-[acceptor protein]-L-lysine.</text>
        <dbReference type="EC" id="2.3.2.27"/>
    </reaction>
</comment>
<comment type="pathway">
    <text evidence="5">Protein modification; protein ubiquitination.</text>
</comment>
<comment type="subunit">
    <text evidence="3">Interacts with SPL14/IPA1.</text>
</comment>
<comment type="subcellular location">
    <subcellularLocation>
        <location evidence="3">Nucleus</location>
    </subcellularLocation>
</comment>
<comment type="alternative products">
    <event type="alternative splicing"/>
    <isoform>
        <id>Q5Z8R1-1</id>
        <name>1</name>
        <sequence type="displayed"/>
    </isoform>
    <isoform>
        <id>Q5Z8R1-2</id>
        <name>2</name>
        <sequence type="described" ref="VSP_061157"/>
    </isoform>
</comment>
<comment type="disruption phenotype">
    <text evidence="3">Altered plant architecture, including increased number of tillers, enlarged panicles, and increased grain yield per plant.</text>
</comment>
<comment type="sequence caution" evidence="5">
    <conflict type="erroneous initiation">
        <sequence resource="EMBL-CDS" id="BAF04896"/>
    </conflict>
    <text>Extended N-terminus.</text>
</comment>
<keyword id="KW-0025">Alternative splicing</keyword>
<keyword id="KW-0479">Metal-binding</keyword>
<keyword id="KW-0539">Nucleus</keyword>
<keyword id="KW-1185">Reference proteome</keyword>
<keyword id="KW-0808">Transferase</keyword>
<keyword id="KW-0833">Ubl conjugation pathway</keyword>
<keyword id="KW-0862">Zinc</keyword>
<keyword id="KW-0863">Zinc-finger</keyword>
<name>IPI1_ORYSJ</name>
<organism>
    <name type="scientific">Oryza sativa subsp. japonica</name>
    <name type="common">Rice</name>
    <dbReference type="NCBI Taxonomy" id="39947"/>
    <lineage>
        <taxon>Eukaryota</taxon>
        <taxon>Viridiplantae</taxon>
        <taxon>Streptophyta</taxon>
        <taxon>Embryophyta</taxon>
        <taxon>Tracheophyta</taxon>
        <taxon>Spermatophyta</taxon>
        <taxon>Magnoliopsida</taxon>
        <taxon>Liliopsida</taxon>
        <taxon>Poales</taxon>
        <taxon>Poaceae</taxon>
        <taxon>BOP clade</taxon>
        <taxon>Oryzoideae</taxon>
        <taxon>Oryzeae</taxon>
        <taxon>Oryzinae</taxon>
        <taxon>Oryza</taxon>
        <taxon>Oryza sativa</taxon>
    </lineage>
</organism>
<gene>
    <name evidence="4" type="primary">IPI1</name>
    <name evidence="8" type="ordered locus">Os01g0350900</name>
    <name evidence="5" type="ordered locus">LOC_Os01g24880</name>
    <name evidence="7" type="ORF">B1051E10.48-1</name>
    <name evidence="6" type="ORF">P0463A02.18-1</name>
</gene>
<dbReference type="EC" id="2.3.2.27" evidence="3"/>
<dbReference type="EMBL" id="AP003258">
    <property type="protein sequence ID" value="BAD52927.1"/>
    <property type="molecule type" value="Genomic_DNA"/>
</dbReference>
<dbReference type="EMBL" id="AP003764">
    <property type="protein sequence ID" value="BAD53853.1"/>
    <property type="molecule type" value="Genomic_DNA"/>
</dbReference>
<dbReference type="EMBL" id="AP008207">
    <property type="protein sequence ID" value="BAF04896.1"/>
    <property type="status" value="ALT_INIT"/>
    <property type="molecule type" value="Genomic_DNA"/>
</dbReference>
<dbReference type="EMBL" id="AP014957">
    <property type="protein sequence ID" value="BAS72030.1"/>
    <property type="molecule type" value="Genomic_DNA"/>
</dbReference>
<dbReference type="EMBL" id="AK070217">
    <property type="protein sequence ID" value="BAG91836.1"/>
    <property type="molecule type" value="mRNA"/>
</dbReference>
<dbReference type="SMR" id="Q5Z8R1"/>
<dbReference type="FunCoup" id="Q5Z8R1">
    <property type="interactions" value="3083"/>
</dbReference>
<dbReference type="PaxDb" id="39947-B7EHI9"/>
<dbReference type="EnsemblPlants" id="Os01t0350900-02">
    <molecule id="Q5Z8R1-1"/>
    <property type="protein sequence ID" value="Os01t0350900-02"/>
    <property type="gene ID" value="Os01g0350900"/>
</dbReference>
<dbReference type="Gramene" id="Os01t0350900-02">
    <molecule id="Q5Z8R1-1"/>
    <property type="protein sequence ID" value="Os01t0350900-02"/>
    <property type="gene ID" value="Os01g0350900"/>
</dbReference>
<dbReference type="KEGG" id="dosa:Os01g0350900"/>
<dbReference type="HOGENOM" id="CLU_037685_0_1_1"/>
<dbReference type="InParanoid" id="Q5Z8R1"/>
<dbReference type="PlantReactome" id="R-OSA-9030908">
    <property type="pathway name" value="Underwater shoot and internode elongation"/>
</dbReference>
<dbReference type="UniPathway" id="UPA00143"/>
<dbReference type="Proteomes" id="UP000000763">
    <property type="component" value="Chromosome 1"/>
</dbReference>
<dbReference type="Proteomes" id="UP000059680">
    <property type="component" value="Chromosome 1"/>
</dbReference>
<dbReference type="ExpressionAtlas" id="Q5Z8R1">
    <property type="expression patterns" value="baseline and differential"/>
</dbReference>
<dbReference type="GO" id="GO:0005634">
    <property type="term" value="C:nucleus"/>
    <property type="evidence" value="ECO:0000314"/>
    <property type="project" value="UniProtKB"/>
</dbReference>
<dbReference type="GO" id="GO:0004842">
    <property type="term" value="F:ubiquitin-protein transferase activity"/>
    <property type="evidence" value="ECO:0000314"/>
    <property type="project" value="UniProtKB"/>
</dbReference>
<dbReference type="GO" id="GO:0008270">
    <property type="term" value="F:zinc ion binding"/>
    <property type="evidence" value="ECO:0007669"/>
    <property type="project" value="UniProtKB-KW"/>
</dbReference>
<dbReference type="GO" id="GO:0048450">
    <property type="term" value="P:floral organ structural organization"/>
    <property type="evidence" value="ECO:0000315"/>
    <property type="project" value="UniProtKB"/>
</dbReference>
<dbReference type="GO" id="GO:0016567">
    <property type="term" value="P:protein ubiquitination"/>
    <property type="evidence" value="ECO:0000314"/>
    <property type="project" value="UniProtKB"/>
</dbReference>
<dbReference type="GO" id="GO:0080050">
    <property type="term" value="P:regulation of seed development"/>
    <property type="evidence" value="ECO:0000315"/>
    <property type="project" value="UniProtKB"/>
</dbReference>
<dbReference type="CDD" id="cd16448">
    <property type="entry name" value="RING-H2"/>
    <property type="match status" value="1"/>
</dbReference>
<dbReference type="Gene3D" id="3.30.40.10">
    <property type="entry name" value="Zinc/RING finger domain, C3HC4 (zinc finger)"/>
    <property type="match status" value="1"/>
</dbReference>
<dbReference type="InterPro" id="IPR044274">
    <property type="entry name" value="RFI2"/>
</dbReference>
<dbReference type="InterPro" id="IPR001841">
    <property type="entry name" value="Znf_RING"/>
</dbReference>
<dbReference type="InterPro" id="IPR013083">
    <property type="entry name" value="Znf_RING/FYVE/PHD"/>
</dbReference>
<dbReference type="PANTHER" id="PTHR46798:SF13">
    <property type="entry name" value="E3 UBIQUITIN-PROTEIN LIGASE IPI1"/>
    <property type="match status" value="1"/>
</dbReference>
<dbReference type="PANTHER" id="PTHR46798">
    <property type="entry name" value="OS09G0511500 PROTEIN"/>
    <property type="match status" value="1"/>
</dbReference>
<dbReference type="Pfam" id="PF13639">
    <property type="entry name" value="zf-RING_2"/>
    <property type="match status" value="1"/>
</dbReference>
<dbReference type="SMART" id="SM00184">
    <property type="entry name" value="RING"/>
    <property type="match status" value="1"/>
</dbReference>
<dbReference type="SUPFAM" id="SSF57850">
    <property type="entry name" value="RING/U-box"/>
    <property type="match status" value="1"/>
</dbReference>
<dbReference type="PROSITE" id="PS50089">
    <property type="entry name" value="ZF_RING_2"/>
    <property type="match status" value="1"/>
</dbReference>